<accession>A4J678</accession>
<evidence type="ECO:0000255" key="1">
    <source>
        <dbReference type="HAMAP-Rule" id="MF_01678"/>
    </source>
</evidence>
<evidence type="ECO:0000305" key="2"/>
<protein>
    <recommendedName>
        <fullName evidence="1">Methylthioribose-1-phosphate isomerase</fullName>
        <shortName evidence="1">M1Pi</shortName>
        <shortName evidence="1">MTR-1-P isomerase</shortName>
        <ecNumber evidence="1">5.3.1.23</ecNumber>
    </recommendedName>
    <alternativeName>
        <fullName evidence="1">S-methyl-5-thioribose-1-phosphate isomerase</fullName>
    </alternativeName>
</protein>
<feature type="chain" id="PRO_0000357177" description="Methylthioribose-1-phosphate isomerase">
    <location>
        <begin position="1"/>
        <end position="346"/>
    </location>
</feature>
<feature type="active site" description="Proton donor" evidence="1">
    <location>
        <position position="235"/>
    </location>
</feature>
<feature type="binding site" evidence="1">
    <location>
        <begin position="44"/>
        <end position="46"/>
    </location>
    <ligand>
        <name>substrate</name>
    </ligand>
</feature>
<feature type="binding site" evidence="1">
    <location>
        <position position="87"/>
    </location>
    <ligand>
        <name>substrate</name>
    </ligand>
</feature>
<feature type="binding site" evidence="1">
    <location>
        <position position="194"/>
    </location>
    <ligand>
        <name>substrate</name>
    </ligand>
</feature>
<feature type="binding site" evidence="1">
    <location>
        <begin position="245"/>
        <end position="246"/>
    </location>
    <ligand>
        <name>substrate</name>
    </ligand>
</feature>
<feature type="site" description="Transition state stabilizer" evidence="1">
    <location>
        <position position="155"/>
    </location>
</feature>
<proteinExistence type="inferred from homology"/>
<reference key="1">
    <citation type="submission" date="2007-03" db="EMBL/GenBank/DDBJ databases">
        <title>Complete sequence of Desulfotomaculum reducens MI-1.</title>
        <authorList>
            <consortium name="US DOE Joint Genome Institute"/>
            <person name="Copeland A."/>
            <person name="Lucas S."/>
            <person name="Lapidus A."/>
            <person name="Barry K."/>
            <person name="Detter J.C."/>
            <person name="Glavina del Rio T."/>
            <person name="Hammon N."/>
            <person name="Israni S."/>
            <person name="Dalin E."/>
            <person name="Tice H."/>
            <person name="Pitluck S."/>
            <person name="Sims D."/>
            <person name="Brettin T."/>
            <person name="Bruce D."/>
            <person name="Han C."/>
            <person name="Tapia R."/>
            <person name="Schmutz J."/>
            <person name="Larimer F."/>
            <person name="Land M."/>
            <person name="Hauser L."/>
            <person name="Kyrpides N."/>
            <person name="Kim E."/>
            <person name="Tebo B.M."/>
            <person name="Richardson P."/>
        </authorList>
    </citation>
    <scope>NUCLEOTIDE SEQUENCE [LARGE SCALE GENOMIC DNA]</scope>
    <source>
        <strain>ATCC BAA-1160 / DSM 100696 / MI-1</strain>
    </source>
</reference>
<gene>
    <name evidence="1" type="primary">mtnA</name>
    <name type="ordered locus">Dred_2064</name>
</gene>
<dbReference type="EC" id="5.3.1.23" evidence="1"/>
<dbReference type="EMBL" id="CP000612">
    <property type="protein sequence ID" value="ABO50581.1"/>
    <property type="molecule type" value="Genomic_DNA"/>
</dbReference>
<dbReference type="RefSeq" id="WP_011878387.1">
    <property type="nucleotide sequence ID" value="NC_009253.1"/>
</dbReference>
<dbReference type="SMR" id="A4J678"/>
<dbReference type="STRING" id="349161.Dred_2064"/>
<dbReference type="KEGG" id="drm:Dred_2064"/>
<dbReference type="eggNOG" id="COG0182">
    <property type="taxonomic scope" value="Bacteria"/>
</dbReference>
<dbReference type="HOGENOM" id="CLU_016218_1_2_9"/>
<dbReference type="OrthoDB" id="9803436at2"/>
<dbReference type="UniPathway" id="UPA00904">
    <property type="reaction ID" value="UER00874"/>
</dbReference>
<dbReference type="Proteomes" id="UP000001556">
    <property type="component" value="Chromosome"/>
</dbReference>
<dbReference type="GO" id="GO:0046523">
    <property type="term" value="F:S-methyl-5-thioribose-1-phosphate isomerase activity"/>
    <property type="evidence" value="ECO:0007669"/>
    <property type="project" value="UniProtKB-UniRule"/>
</dbReference>
<dbReference type="GO" id="GO:0019509">
    <property type="term" value="P:L-methionine salvage from methylthioadenosine"/>
    <property type="evidence" value="ECO:0007669"/>
    <property type="project" value="UniProtKB-UniRule"/>
</dbReference>
<dbReference type="FunFam" id="1.20.120.420:FF:000003">
    <property type="entry name" value="Methylthioribose-1-phosphate isomerase"/>
    <property type="match status" value="1"/>
</dbReference>
<dbReference type="FunFam" id="3.40.50.10470:FF:000010">
    <property type="entry name" value="Methylthioribose-1-phosphate isomerase"/>
    <property type="match status" value="1"/>
</dbReference>
<dbReference type="Gene3D" id="1.20.120.420">
    <property type="entry name" value="translation initiation factor eif-2b, domain 1"/>
    <property type="match status" value="1"/>
</dbReference>
<dbReference type="Gene3D" id="3.40.50.10470">
    <property type="entry name" value="Translation initiation factor eif-2b, domain 2"/>
    <property type="match status" value="1"/>
</dbReference>
<dbReference type="HAMAP" id="MF_01678">
    <property type="entry name" value="Salvage_MtnA"/>
    <property type="match status" value="1"/>
</dbReference>
<dbReference type="InterPro" id="IPR000649">
    <property type="entry name" value="IF-2B-related"/>
</dbReference>
<dbReference type="InterPro" id="IPR005251">
    <property type="entry name" value="IF-M1Pi"/>
</dbReference>
<dbReference type="InterPro" id="IPR042529">
    <property type="entry name" value="IF_2B-like_C"/>
</dbReference>
<dbReference type="InterPro" id="IPR011559">
    <property type="entry name" value="Initiation_fac_2B_a/b/d"/>
</dbReference>
<dbReference type="InterPro" id="IPR027363">
    <property type="entry name" value="M1Pi_N"/>
</dbReference>
<dbReference type="InterPro" id="IPR037171">
    <property type="entry name" value="NagB/RpiA_transferase-like"/>
</dbReference>
<dbReference type="NCBIfam" id="TIGR00524">
    <property type="entry name" value="eIF-2B_rel"/>
    <property type="match status" value="1"/>
</dbReference>
<dbReference type="NCBIfam" id="NF004326">
    <property type="entry name" value="PRK05720.1"/>
    <property type="match status" value="1"/>
</dbReference>
<dbReference type="NCBIfam" id="TIGR00512">
    <property type="entry name" value="salvage_mtnA"/>
    <property type="match status" value="1"/>
</dbReference>
<dbReference type="PANTHER" id="PTHR43475">
    <property type="entry name" value="METHYLTHIORIBOSE-1-PHOSPHATE ISOMERASE"/>
    <property type="match status" value="1"/>
</dbReference>
<dbReference type="PANTHER" id="PTHR43475:SF1">
    <property type="entry name" value="METHYLTHIORIBOSE-1-PHOSPHATE ISOMERASE"/>
    <property type="match status" value="1"/>
</dbReference>
<dbReference type="Pfam" id="PF01008">
    <property type="entry name" value="IF-2B"/>
    <property type="match status" value="1"/>
</dbReference>
<dbReference type="SUPFAM" id="SSF100950">
    <property type="entry name" value="NagB/RpiA/CoA transferase-like"/>
    <property type="match status" value="1"/>
</dbReference>
<sequence length="346" mass="37721">MNAIIWENNQLQLLDQTKLPRTIEYIQCTDYHTVGKAIKKLSVRGAPAIGAAAAYGLVVGAQQVDATDRKTFLEKLEAIAGELGATRPTAVNLRWALDRMMMRLSTAPEQNVEDLRKIMLEEAHAIYNEDVESNRKMGEYGQELLPEEARVLTHCNAGALATAGYGTALGVVRAAHEKGKKVHVYADETRPLLQGARLTSWEMVQEGIPVTLITDNMAGYLMSKKMVDCIVVGADRITANGDVANKIGTYGVAVLANHHNIPFYVAAPLSTIDMSLSSGEEIPIEERDPQEVTHHGGQPMAPEGVQVWNPAFDVTPNSLVKAIITERGVVLPPFAENLAKICCNKK</sequence>
<organism>
    <name type="scientific">Desulforamulus reducens (strain ATCC BAA-1160 / DSM 100696 / MI-1)</name>
    <name type="common">Desulfotomaculum reducens</name>
    <dbReference type="NCBI Taxonomy" id="349161"/>
    <lineage>
        <taxon>Bacteria</taxon>
        <taxon>Bacillati</taxon>
        <taxon>Bacillota</taxon>
        <taxon>Clostridia</taxon>
        <taxon>Eubacteriales</taxon>
        <taxon>Peptococcaceae</taxon>
        <taxon>Desulforamulus</taxon>
    </lineage>
</organism>
<keyword id="KW-0028">Amino-acid biosynthesis</keyword>
<keyword id="KW-0413">Isomerase</keyword>
<keyword id="KW-0486">Methionine biosynthesis</keyword>
<keyword id="KW-1185">Reference proteome</keyword>
<name>MTNA_DESRM</name>
<comment type="function">
    <text evidence="1">Catalyzes the interconversion of methylthioribose-1-phosphate (MTR-1-P) into methylthioribulose-1-phosphate (MTRu-1-P).</text>
</comment>
<comment type="catalytic activity">
    <reaction evidence="1">
        <text>5-(methylsulfanyl)-alpha-D-ribose 1-phosphate = 5-(methylsulfanyl)-D-ribulose 1-phosphate</text>
        <dbReference type="Rhea" id="RHEA:19989"/>
        <dbReference type="ChEBI" id="CHEBI:58533"/>
        <dbReference type="ChEBI" id="CHEBI:58548"/>
        <dbReference type="EC" id="5.3.1.23"/>
    </reaction>
</comment>
<comment type="pathway">
    <text evidence="1">Amino-acid biosynthesis; L-methionine biosynthesis via salvage pathway; L-methionine from S-methyl-5-thio-alpha-D-ribose 1-phosphate: step 1/6.</text>
</comment>
<comment type="similarity">
    <text evidence="2">Belongs to the eIF-2B alpha/beta/delta subunits family. MtnA subfamily.</text>
</comment>